<sequence>MAAPVRRSVVFVTGNAKKLEEVTQILGDSSPYTLVARKIDLPEYQGEPDEISVQKCREAARQIRGPVIVEDTCLCFNALGGLPGPYIKWFLEKLKPEGLYKLLAGFEDKSAYALCTFAFSTGNPEEPVKLFKGQTHGVIVEPRGPRDFGWDPCFQPDGYDQTYAELPKAVKNSISHRYRALSELSAFFLQSNPTEAPSSPS</sequence>
<comment type="function">
    <text evidence="1">Pyrophosphatase that hydrolyzes the non-canonical purine nucleotides inosine triphosphate (ITP), deoxyinosine triphosphate (dITP) as well as 2'-deoxy-N-6-hydroxylaminopurine triphosphate (dHAPTP) and xanthosine 5'-triphosphate (XTP) to their respective monophosphate derivatives. The enzyme does not distinguish between the deoxy- and ribose forms. Probably excludes non-canonical purines from RNA and DNA precursor pools, thus preventing their incorporation into RNA and DNA and avoiding chromosomal lesions.</text>
</comment>
<comment type="catalytic activity">
    <reaction evidence="1">
        <text>ITP + H2O = IMP + diphosphate + H(+)</text>
        <dbReference type="Rhea" id="RHEA:29399"/>
        <dbReference type="ChEBI" id="CHEBI:15377"/>
        <dbReference type="ChEBI" id="CHEBI:15378"/>
        <dbReference type="ChEBI" id="CHEBI:33019"/>
        <dbReference type="ChEBI" id="CHEBI:58053"/>
        <dbReference type="ChEBI" id="CHEBI:61402"/>
        <dbReference type="EC" id="3.6.1.66"/>
    </reaction>
    <physiologicalReaction direction="left-to-right" evidence="1">
        <dbReference type="Rhea" id="RHEA:29400"/>
    </physiologicalReaction>
</comment>
<comment type="catalytic activity">
    <reaction evidence="1">
        <text>dITP + H2O = dIMP + diphosphate + H(+)</text>
        <dbReference type="Rhea" id="RHEA:28342"/>
        <dbReference type="ChEBI" id="CHEBI:15377"/>
        <dbReference type="ChEBI" id="CHEBI:15378"/>
        <dbReference type="ChEBI" id="CHEBI:33019"/>
        <dbReference type="ChEBI" id="CHEBI:61194"/>
        <dbReference type="ChEBI" id="CHEBI:61382"/>
        <dbReference type="EC" id="3.6.1.66"/>
    </reaction>
    <physiologicalReaction direction="left-to-right" evidence="1">
        <dbReference type="Rhea" id="RHEA:28343"/>
    </physiologicalReaction>
</comment>
<comment type="catalytic activity">
    <reaction evidence="1">
        <text>XTP + H2O = XMP + diphosphate + H(+)</text>
        <dbReference type="Rhea" id="RHEA:28610"/>
        <dbReference type="ChEBI" id="CHEBI:15377"/>
        <dbReference type="ChEBI" id="CHEBI:15378"/>
        <dbReference type="ChEBI" id="CHEBI:33019"/>
        <dbReference type="ChEBI" id="CHEBI:57464"/>
        <dbReference type="ChEBI" id="CHEBI:61314"/>
        <dbReference type="EC" id="3.6.1.66"/>
    </reaction>
    <physiologicalReaction direction="left-to-right" evidence="1">
        <dbReference type="Rhea" id="RHEA:28611"/>
    </physiologicalReaction>
</comment>
<comment type="catalytic activity">
    <reaction evidence="1">
        <text>N(6)-hydroxy-dATP + H2O = N(6)-hydroxy-dAMP + diphosphate + H(+)</text>
        <dbReference type="Rhea" id="RHEA:83971"/>
        <dbReference type="ChEBI" id="CHEBI:15377"/>
        <dbReference type="ChEBI" id="CHEBI:15378"/>
        <dbReference type="ChEBI" id="CHEBI:33019"/>
        <dbReference type="ChEBI" id="CHEBI:233529"/>
        <dbReference type="ChEBI" id="CHEBI:233530"/>
    </reaction>
    <physiologicalReaction direction="left-to-right" evidence="1">
        <dbReference type="Rhea" id="RHEA:83972"/>
    </physiologicalReaction>
</comment>
<comment type="cofactor">
    <cofactor evidence="1">
        <name>Mg(2+)</name>
        <dbReference type="ChEBI" id="CHEBI:18420"/>
    </cofactor>
    <cofactor evidence="1">
        <name>Mn(2+)</name>
        <dbReference type="ChEBI" id="CHEBI:29035"/>
    </cofactor>
    <text evidence="1">Binds 1 divalent metal cation per subunit; can use either Mg(2+) or Mn(2+).</text>
</comment>
<comment type="subunit">
    <text evidence="1">Homodimer.</text>
</comment>
<comment type="subcellular location">
    <subcellularLocation>
        <location evidence="1">Cytoplasm</location>
    </subcellularLocation>
</comment>
<comment type="similarity">
    <text evidence="1">Belongs to the HAM1 NTPase family.</text>
</comment>
<gene>
    <name evidence="1" type="primary">ITPA</name>
</gene>
<reference key="1">
    <citation type="journal article" date="2004" name="Nature">
        <title>Sequence and comparative analysis of the chicken genome provide unique perspectives on vertebrate evolution.</title>
        <authorList>
            <person name="Hillier L.W."/>
            <person name="Miller W."/>
            <person name="Birney E."/>
            <person name="Warren W."/>
            <person name="Hardison R.C."/>
            <person name="Ponting C.P."/>
            <person name="Bork P."/>
            <person name="Burt D.W."/>
            <person name="Groenen M.A.M."/>
            <person name="Delany M.E."/>
            <person name="Dodgson J.B."/>
            <person name="Chinwalla A.T."/>
            <person name="Cliften P.F."/>
            <person name="Clifton S.W."/>
            <person name="Delehaunty K.D."/>
            <person name="Fronick C."/>
            <person name="Fulton R.S."/>
            <person name="Graves T.A."/>
            <person name="Kremitzki C."/>
            <person name="Layman D."/>
            <person name="Magrini V."/>
            <person name="McPherson J.D."/>
            <person name="Miner T.L."/>
            <person name="Minx P."/>
            <person name="Nash W.E."/>
            <person name="Nhan M.N."/>
            <person name="Nelson J.O."/>
            <person name="Oddy L.G."/>
            <person name="Pohl C.S."/>
            <person name="Randall-Maher J."/>
            <person name="Smith S.M."/>
            <person name="Wallis J.W."/>
            <person name="Yang S.-P."/>
            <person name="Romanov M.N."/>
            <person name="Rondelli C.M."/>
            <person name="Paton B."/>
            <person name="Smith J."/>
            <person name="Morrice D."/>
            <person name="Daniels L."/>
            <person name="Tempest H.G."/>
            <person name="Robertson L."/>
            <person name="Masabanda J.S."/>
            <person name="Griffin D.K."/>
            <person name="Vignal A."/>
            <person name="Fillon V."/>
            <person name="Jacobbson L."/>
            <person name="Kerje S."/>
            <person name="Andersson L."/>
            <person name="Crooijmans R.P."/>
            <person name="Aerts J."/>
            <person name="van der Poel J.J."/>
            <person name="Ellegren H."/>
            <person name="Caldwell R.B."/>
            <person name="Hubbard S.J."/>
            <person name="Grafham D.V."/>
            <person name="Kierzek A.M."/>
            <person name="McLaren S.R."/>
            <person name="Overton I.M."/>
            <person name="Arakawa H."/>
            <person name="Beattie K.J."/>
            <person name="Bezzubov Y."/>
            <person name="Boardman P.E."/>
            <person name="Bonfield J.K."/>
            <person name="Croning M.D.R."/>
            <person name="Davies R.M."/>
            <person name="Francis M.D."/>
            <person name="Humphray S.J."/>
            <person name="Scott C.E."/>
            <person name="Taylor R.G."/>
            <person name="Tickle C."/>
            <person name="Brown W.R.A."/>
            <person name="Rogers J."/>
            <person name="Buerstedde J.-M."/>
            <person name="Wilson S.A."/>
            <person name="Stubbs L."/>
            <person name="Ovcharenko I."/>
            <person name="Gordon L."/>
            <person name="Lucas S."/>
            <person name="Miller M.M."/>
            <person name="Inoko H."/>
            <person name="Shiina T."/>
            <person name="Kaufman J."/>
            <person name="Salomonsen J."/>
            <person name="Skjoedt K."/>
            <person name="Wong G.K.-S."/>
            <person name="Wang J."/>
            <person name="Liu B."/>
            <person name="Wang J."/>
            <person name="Yu J."/>
            <person name="Yang H."/>
            <person name="Nefedov M."/>
            <person name="Koriabine M."/>
            <person name="Dejong P.J."/>
            <person name="Goodstadt L."/>
            <person name="Webber C."/>
            <person name="Dickens N.J."/>
            <person name="Letunic I."/>
            <person name="Suyama M."/>
            <person name="Torrents D."/>
            <person name="von Mering C."/>
            <person name="Zdobnov E.M."/>
            <person name="Makova K."/>
            <person name="Nekrutenko A."/>
            <person name="Elnitski L."/>
            <person name="Eswara P."/>
            <person name="King D.C."/>
            <person name="Yang S.-P."/>
            <person name="Tyekucheva S."/>
            <person name="Radakrishnan A."/>
            <person name="Harris R.S."/>
            <person name="Chiaromonte F."/>
            <person name="Taylor J."/>
            <person name="He J."/>
            <person name="Rijnkels M."/>
            <person name="Griffiths-Jones S."/>
            <person name="Ureta-Vidal A."/>
            <person name="Hoffman M.M."/>
            <person name="Severin J."/>
            <person name="Searle S.M.J."/>
            <person name="Law A.S."/>
            <person name="Speed D."/>
            <person name="Waddington D."/>
            <person name="Cheng Z."/>
            <person name="Tuzun E."/>
            <person name="Eichler E."/>
            <person name="Bao Z."/>
            <person name="Flicek P."/>
            <person name="Shteynberg D.D."/>
            <person name="Brent M.R."/>
            <person name="Bye J.M."/>
            <person name="Huckle E.J."/>
            <person name="Chatterji S."/>
            <person name="Dewey C."/>
            <person name="Pachter L."/>
            <person name="Kouranov A."/>
            <person name="Mourelatos Z."/>
            <person name="Hatzigeorgiou A.G."/>
            <person name="Paterson A.H."/>
            <person name="Ivarie R."/>
            <person name="Brandstrom M."/>
            <person name="Axelsson E."/>
            <person name="Backstrom N."/>
            <person name="Berlin S."/>
            <person name="Webster M.T."/>
            <person name="Pourquie O."/>
            <person name="Reymond A."/>
            <person name="Ucla C."/>
            <person name="Antonarakis S.E."/>
            <person name="Long M."/>
            <person name="Emerson J.J."/>
            <person name="Betran E."/>
            <person name="Dupanloup I."/>
            <person name="Kaessmann H."/>
            <person name="Hinrichs A.S."/>
            <person name="Bejerano G."/>
            <person name="Furey T.S."/>
            <person name="Harte R.A."/>
            <person name="Raney B."/>
            <person name="Siepel A."/>
            <person name="Kent W.J."/>
            <person name="Haussler D."/>
            <person name="Eyras E."/>
            <person name="Castelo R."/>
            <person name="Abril J.F."/>
            <person name="Castellano S."/>
            <person name="Camara F."/>
            <person name="Parra G."/>
            <person name="Guigo R."/>
            <person name="Bourque G."/>
            <person name="Tesler G."/>
            <person name="Pevzner P.A."/>
            <person name="Smit A."/>
            <person name="Fulton L.A."/>
            <person name="Mardis E.R."/>
            <person name="Wilson R.K."/>
        </authorList>
    </citation>
    <scope>NUCLEOTIDE SEQUENCE [LARGE SCALE GENOMIC DNA]</scope>
    <source>
        <strain>Red jungle fowl</strain>
    </source>
</reference>
<proteinExistence type="inferred from homology"/>
<organism>
    <name type="scientific">Gallus gallus</name>
    <name type="common">Chicken</name>
    <dbReference type="NCBI Taxonomy" id="9031"/>
    <lineage>
        <taxon>Eukaryota</taxon>
        <taxon>Metazoa</taxon>
        <taxon>Chordata</taxon>
        <taxon>Craniata</taxon>
        <taxon>Vertebrata</taxon>
        <taxon>Euteleostomi</taxon>
        <taxon>Archelosauria</taxon>
        <taxon>Archosauria</taxon>
        <taxon>Dinosauria</taxon>
        <taxon>Saurischia</taxon>
        <taxon>Theropoda</taxon>
        <taxon>Coelurosauria</taxon>
        <taxon>Aves</taxon>
        <taxon>Neognathae</taxon>
        <taxon>Galloanserae</taxon>
        <taxon>Galliformes</taxon>
        <taxon>Phasianidae</taxon>
        <taxon>Phasianinae</taxon>
        <taxon>Gallus</taxon>
    </lineage>
</organism>
<feature type="chain" id="PRO_0000413102" description="Inosine triphosphate pyrophosphatase">
    <location>
        <begin position="1"/>
        <end position="201"/>
    </location>
</feature>
<feature type="binding site" evidence="1">
    <location>
        <begin position="13"/>
        <end position="18"/>
    </location>
    <ligand>
        <name>ITP</name>
        <dbReference type="ChEBI" id="CHEBI:61402"/>
    </ligand>
</feature>
<feature type="binding site" evidence="1">
    <location>
        <position position="43"/>
    </location>
    <ligand>
        <name>Mg(2+)</name>
        <dbReference type="ChEBI" id="CHEBI:18420"/>
    </ligand>
</feature>
<feature type="binding site" evidence="1">
    <location>
        <position position="55"/>
    </location>
    <ligand>
        <name>ITP</name>
        <dbReference type="ChEBI" id="CHEBI:61402"/>
    </ligand>
</feature>
<feature type="binding site" evidence="1">
    <location>
        <begin position="71"/>
        <end position="72"/>
    </location>
    <ligand>
        <name>ITP</name>
        <dbReference type="ChEBI" id="CHEBI:61402"/>
    </ligand>
</feature>
<feature type="binding site" evidence="1">
    <location>
        <position position="88"/>
    </location>
    <ligand>
        <name>ITP</name>
        <dbReference type="ChEBI" id="CHEBI:61402"/>
    </ligand>
</feature>
<feature type="binding site" evidence="1">
    <location>
        <begin position="148"/>
        <end position="151"/>
    </location>
    <ligand>
        <name>ITP</name>
        <dbReference type="ChEBI" id="CHEBI:61402"/>
    </ligand>
</feature>
<feature type="binding site" evidence="1">
    <location>
        <position position="171"/>
    </location>
    <ligand>
        <name>ITP</name>
        <dbReference type="ChEBI" id="CHEBI:61402"/>
    </ligand>
</feature>
<feature type="binding site" evidence="1">
    <location>
        <begin position="176"/>
        <end position="177"/>
    </location>
    <ligand>
        <name>ITP</name>
        <dbReference type="ChEBI" id="CHEBI:61402"/>
    </ligand>
</feature>
<protein>
    <recommendedName>
        <fullName evidence="1">Inosine triphosphate pyrophosphatase</fullName>
        <shortName evidence="1">ITPase</shortName>
        <shortName evidence="1">Inosine triphosphatase</shortName>
        <ecNumber evidence="1">3.6.1.66</ecNumber>
    </recommendedName>
    <alternativeName>
        <fullName evidence="1">Non-canonical purine NTP pyrophosphatase</fullName>
    </alternativeName>
    <alternativeName>
        <fullName evidence="1">Non-standard purine NTP pyrophosphatase</fullName>
    </alternativeName>
    <alternativeName>
        <fullName evidence="1">Nucleoside-triphosphate diphosphatase</fullName>
    </alternativeName>
    <alternativeName>
        <fullName evidence="1">Nucleoside-triphosphate pyrophosphatase</fullName>
        <shortName evidence="1">NTPase</shortName>
    </alternativeName>
    <alternativeName>
        <fullName evidence="1">XTP/dITP diphosphatase</fullName>
    </alternativeName>
</protein>
<dbReference type="EC" id="3.6.1.66" evidence="1"/>
<dbReference type="RefSeq" id="NP_001258859.1">
    <property type="nucleotide sequence ID" value="NM_001271930.4"/>
</dbReference>
<dbReference type="SMR" id="F1NLH9"/>
<dbReference type="FunCoup" id="F1NLH9">
    <property type="interactions" value="1856"/>
</dbReference>
<dbReference type="STRING" id="9031.ENSGALP00000005130"/>
<dbReference type="PaxDb" id="9031-ENSGALP00000005130"/>
<dbReference type="Ensembl" id="ENSGALT00010033231.1">
    <property type="protein sequence ID" value="ENSGALP00010019631.1"/>
    <property type="gene ID" value="ENSGALG00010013848.1"/>
</dbReference>
<dbReference type="GeneID" id="424390"/>
<dbReference type="KEGG" id="gga:424390"/>
<dbReference type="CTD" id="3704"/>
<dbReference type="VEuPathDB" id="HostDB:geneid_424390"/>
<dbReference type="eggNOG" id="KOG3222">
    <property type="taxonomic scope" value="Eukaryota"/>
</dbReference>
<dbReference type="GeneTree" id="ENSGT00390000015399"/>
<dbReference type="HOGENOM" id="CLU_082080_1_1_1"/>
<dbReference type="InParanoid" id="F1NLH9"/>
<dbReference type="OMA" id="YDPIFQP"/>
<dbReference type="OrthoDB" id="6288734at2759"/>
<dbReference type="Reactome" id="R-GGA-74259">
    <property type="pathway name" value="Purine catabolism"/>
</dbReference>
<dbReference type="Reactome" id="R-GGA-9755088">
    <property type="pathway name" value="Ribavirin ADME"/>
</dbReference>
<dbReference type="PRO" id="PR:F1NLH9"/>
<dbReference type="Proteomes" id="UP000000539">
    <property type="component" value="Chromosome 8"/>
</dbReference>
<dbReference type="Bgee" id="ENSGALG00000003250">
    <property type="expression patterns" value="Expressed in testis and 13 other cell types or tissues"/>
</dbReference>
<dbReference type="GO" id="GO:0005737">
    <property type="term" value="C:cytoplasm"/>
    <property type="evidence" value="ECO:0000318"/>
    <property type="project" value="GO_Central"/>
</dbReference>
<dbReference type="GO" id="GO:0035870">
    <property type="term" value="F:dITP diphosphatase activity"/>
    <property type="evidence" value="ECO:0007669"/>
    <property type="project" value="RHEA"/>
</dbReference>
<dbReference type="GO" id="GO:0036220">
    <property type="term" value="F:ITP diphosphatase activity"/>
    <property type="evidence" value="ECO:0007669"/>
    <property type="project" value="RHEA"/>
</dbReference>
<dbReference type="GO" id="GO:0046872">
    <property type="term" value="F:metal ion binding"/>
    <property type="evidence" value="ECO:0007669"/>
    <property type="project" value="UniProtKB-KW"/>
</dbReference>
<dbReference type="GO" id="GO:0047429">
    <property type="term" value="F:nucleoside triphosphate diphosphatase activity"/>
    <property type="evidence" value="ECO:0000318"/>
    <property type="project" value="GO_Central"/>
</dbReference>
<dbReference type="GO" id="GO:0000166">
    <property type="term" value="F:nucleotide binding"/>
    <property type="evidence" value="ECO:0007669"/>
    <property type="project" value="UniProtKB-KW"/>
</dbReference>
<dbReference type="GO" id="GO:0036222">
    <property type="term" value="F:XTP diphosphatase activity"/>
    <property type="evidence" value="ECO:0007669"/>
    <property type="project" value="RHEA"/>
</dbReference>
<dbReference type="GO" id="GO:0009204">
    <property type="term" value="P:deoxyribonucleoside triphosphate catabolic process"/>
    <property type="evidence" value="ECO:0007669"/>
    <property type="project" value="UniProtKB-UniRule"/>
</dbReference>
<dbReference type="GO" id="GO:0009143">
    <property type="term" value="P:nucleoside triphosphate catabolic process"/>
    <property type="evidence" value="ECO:0000318"/>
    <property type="project" value="GO_Central"/>
</dbReference>
<dbReference type="GO" id="GO:0009117">
    <property type="term" value="P:nucleotide metabolic process"/>
    <property type="evidence" value="ECO:0007669"/>
    <property type="project" value="UniProtKB-KW"/>
</dbReference>
<dbReference type="CDD" id="cd00515">
    <property type="entry name" value="HAM1"/>
    <property type="match status" value="1"/>
</dbReference>
<dbReference type="FunFam" id="3.90.950.10:FF:000003">
    <property type="entry name" value="Inosine triphosphate pyrophosphatase"/>
    <property type="match status" value="1"/>
</dbReference>
<dbReference type="Gene3D" id="3.90.950.10">
    <property type="match status" value="1"/>
</dbReference>
<dbReference type="HAMAP" id="MF_03148">
    <property type="entry name" value="HAM1_NTPase"/>
    <property type="match status" value="1"/>
</dbReference>
<dbReference type="InterPro" id="IPR027502">
    <property type="entry name" value="ITPase"/>
</dbReference>
<dbReference type="InterPro" id="IPR029001">
    <property type="entry name" value="ITPase-like_fam"/>
</dbReference>
<dbReference type="InterPro" id="IPR002637">
    <property type="entry name" value="RdgB/HAM1"/>
</dbReference>
<dbReference type="NCBIfam" id="TIGR00042">
    <property type="entry name" value="RdgB/HAM1 family non-canonical purine NTP pyrophosphatase"/>
    <property type="match status" value="1"/>
</dbReference>
<dbReference type="PANTHER" id="PTHR11067:SF9">
    <property type="entry name" value="INOSINE TRIPHOSPHATE PYROPHOSPHATASE"/>
    <property type="match status" value="1"/>
</dbReference>
<dbReference type="PANTHER" id="PTHR11067">
    <property type="entry name" value="INOSINE TRIPHOSPHATE PYROPHOSPHATASE/HAM1 PROTEIN"/>
    <property type="match status" value="1"/>
</dbReference>
<dbReference type="Pfam" id="PF01725">
    <property type="entry name" value="Ham1p_like"/>
    <property type="match status" value="1"/>
</dbReference>
<dbReference type="SUPFAM" id="SSF52972">
    <property type="entry name" value="ITPase-like"/>
    <property type="match status" value="1"/>
</dbReference>
<name>ITPA_CHICK</name>
<accession>F1NLH9</accession>
<keyword id="KW-0963">Cytoplasm</keyword>
<keyword id="KW-0378">Hydrolase</keyword>
<keyword id="KW-0460">Magnesium</keyword>
<keyword id="KW-0464">Manganese</keyword>
<keyword id="KW-0479">Metal-binding</keyword>
<keyword id="KW-0546">Nucleotide metabolism</keyword>
<keyword id="KW-0547">Nucleotide-binding</keyword>
<keyword id="KW-1185">Reference proteome</keyword>
<evidence type="ECO:0000255" key="1">
    <source>
        <dbReference type="HAMAP-Rule" id="MF_03148"/>
    </source>
</evidence>